<name>ACTN4_MOUSE</name>
<comment type="function">
    <text evidence="1 9">F-actin cross-linking protein which is thought to anchor actin to a variety of intracellular structures. This is a bundling protein. Probably involved in vesicular trafficking via its association with the CART complex. The CART complex is necessary for efficient transferrin receptor recycling but not for EGFR degradation (By similarity). Involved in tight junction assembly in epithelial cells probably through interaction with MICALL2. Links MICALL2 to the actin cytoskeleton and recruits it to the tight junctions (PubMed:18332111). May also function as a transcriptional coactivator, stimulating transcription mediated by the nuclear hormone receptors PPARG and RARA (By similarity). Association with IGSF8 regulates the immune synapse formation and is required for efficient T-cell activation (By similarity).</text>
</comment>
<comment type="subunit">
    <text evidence="1 3 9 10">Homodimer; antiparallel. Interacts with MAGI1 (By similarity). Interacts with PDLIM2 (By similarity). Identified in a complex with CASK, IQGAP1, MAGI2, NPHS1, SPTAN1 and SPTBN1 (By similarity). Identified in a IGF2BP1-dependent mRNP granule complex containing untranslated mRNAs (By similarity). Component of the CART complex, at least composed of ACTN4, HGS/HRS, MYO5B and TRIM3 (By similarity). Binds TRIM3 at the N-terminus (By similarity). Interacts with MICALL2 (preferentially in opened conformation); stimulated by RAB13 activation (PubMed:18332111). Interacts with PPARG and RARA (By similarity). Binds to VCL; this interaction triggers VCL conformational changes (By similarity). Interacts with SEPTIN14 (PubMed:33228246). Interacts with IGSF8 (By similarity).</text>
</comment>
<comment type="interaction">
    <interactant intactId="EBI-445071">
        <id>P57780</id>
    </interactant>
    <interactant intactId="EBI-6272972">
        <id>Q8K4E0</id>
        <label>Alms1</label>
    </interactant>
    <organismsDiffer>false</organismsDiffer>
    <experiments>4</experiments>
</comment>
<comment type="interaction">
    <interactant intactId="EBI-445071">
        <id>P57780</id>
    </interactant>
    <interactant intactId="EBI-1779852">
        <id>Q3TN34</id>
        <label>Micall2</label>
    </interactant>
    <organismsDiffer>false</organismsDiffer>
    <experiments>9</experiments>
</comment>
<comment type="interaction">
    <interactant intactId="EBI-445071">
        <id>P57780</id>
    </interactant>
    <interactant intactId="EBI-79508">
        <id>P39447</id>
        <label>Tjp1</label>
    </interactant>
    <organismsDiffer>false</organismsDiffer>
    <experiments>6</experiments>
</comment>
<comment type="subcellular location">
    <subcellularLocation>
        <location evidence="1">Nucleus</location>
    </subcellularLocation>
    <subcellularLocation>
        <location evidence="1">Cytoplasm</location>
    </subcellularLocation>
    <subcellularLocation>
        <location evidence="9">Cell junction</location>
    </subcellularLocation>
    <subcellularLocation>
        <location evidence="1">Cytoplasm</location>
        <location evidence="1">Cytoskeleton</location>
        <location evidence="1">Stress fiber</location>
    </subcellularLocation>
    <subcellularLocation>
        <location evidence="10">Cytoplasm</location>
        <location evidence="10">Perinuclear region</location>
    </subcellularLocation>
    <text evidence="1 10">Localized in cytoplasmic mRNP granules containing untranslated mRNAs. Expressed in the perinuclear rim and manchette structure in early elongating spermatids during spermiogenesis (PubMed:33228246).</text>
</comment>
<comment type="developmental stage">
    <text evidence="10">Expressed in early elongating spermatids during spermiogenesis.</text>
</comment>
<comment type="domain">
    <text evidence="1">Contains one Leu-Xaa-Xaa-Leu-Leu (LXXLL) motif that mediates interaction with nuclear receptors.</text>
</comment>
<comment type="similarity">
    <text evidence="11">Belongs to the alpha-actinin family.</text>
</comment>
<organism>
    <name type="scientific">Mus musculus</name>
    <name type="common">Mouse</name>
    <dbReference type="NCBI Taxonomy" id="10090"/>
    <lineage>
        <taxon>Eukaryota</taxon>
        <taxon>Metazoa</taxon>
        <taxon>Chordata</taxon>
        <taxon>Craniata</taxon>
        <taxon>Vertebrata</taxon>
        <taxon>Euteleostomi</taxon>
        <taxon>Mammalia</taxon>
        <taxon>Eutheria</taxon>
        <taxon>Euarchontoglires</taxon>
        <taxon>Glires</taxon>
        <taxon>Rodentia</taxon>
        <taxon>Myomorpha</taxon>
        <taxon>Muroidea</taxon>
        <taxon>Muridae</taxon>
        <taxon>Murinae</taxon>
        <taxon>Mus</taxon>
        <taxon>Mus</taxon>
    </lineage>
</organism>
<protein>
    <recommendedName>
        <fullName evidence="11">Alpha-actinin-4</fullName>
    </recommendedName>
    <alternativeName>
        <fullName evidence="11">Non-muscle alpha-actinin 4</fullName>
    </alternativeName>
</protein>
<dbReference type="EMBL" id="AJ289242">
    <property type="protein sequence ID" value="CAC10069.1"/>
    <property type="molecule type" value="mRNA"/>
</dbReference>
<dbReference type="EMBL" id="BC013616">
    <property type="protein sequence ID" value="AAH13616.1"/>
    <property type="molecule type" value="mRNA"/>
</dbReference>
<dbReference type="EMBL" id="BC087554">
    <property type="protein sequence ID" value="AAH87554.1"/>
    <property type="molecule type" value="mRNA"/>
</dbReference>
<dbReference type="CCDS" id="CCDS21061.1"/>
<dbReference type="RefSeq" id="NP_068695.1">
    <property type="nucleotide sequence ID" value="NM_021895.4"/>
</dbReference>
<dbReference type="BMRB" id="P57780"/>
<dbReference type="SMR" id="P57780"/>
<dbReference type="BioGRID" id="208624">
    <property type="interactions" value="59"/>
</dbReference>
<dbReference type="CORUM" id="P57780"/>
<dbReference type="FunCoup" id="P57780">
    <property type="interactions" value="1477"/>
</dbReference>
<dbReference type="IntAct" id="P57780">
    <property type="interactions" value="20"/>
</dbReference>
<dbReference type="MINT" id="P57780"/>
<dbReference type="STRING" id="10090.ENSMUSP00000066068"/>
<dbReference type="GlyGen" id="P57780">
    <property type="glycosylation" value="3 sites, 1 N-linked glycan (1 site), 1 O-linked glycan (1 site)"/>
</dbReference>
<dbReference type="iPTMnet" id="P57780"/>
<dbReference type="MetOSite" id="P57780"/>
<dbReference type="PhosphoSitePlus" id="P57780"/>
<dbReference type="SwissPalm" id="P57780"/>
<dbReference type="jPOST" id="P57780"/>
<dbReference type="PaxDb" id="10090-ENSMUSP00000066068"/>
<dbReference type="PeptideAtlas" id="P57780"/>
<dbReference type="ProteomicsDB" id="285753"/>
<dbReference type="Pumba" id="P57780"/>
<dbReference type="Antibodypedia" id="974">
    <property type="antibodies" value="490 antibodies from 44 providers"/>
</dbReference>
<dbReference type="DNASU" id="60595"/>
<dbReference type="Ensembl" id="ENSMUST00000068045.14">
    <property type="protein sequence ID" value="ENSMUSP00000066068.8"/>
    <property type="gene ID" value="ENSMUSG00000054808.16"/>
</dbReference>
<dbReference type="GeneID" id="60595"/>
<dbReference type="KEGG" id="mmu:60595"/>
<dbReference type="UCSC" id="uc009gah.1">
    <property type="organism name" value="mouse"/>
</dbReference>
<dbReference type="AGR" id="MGI:1890773"/>
<dbReference type="CTD" id="81"/>
<dbReference type="MGI" id="MGI:1890773">
    <property type="gene designation" value="Actn4"/>
</dbReference>
<dbReference type="VEuPathDB" id="HostDB:ENSMUSG00000054808"/>
<dbReference type="eggNOG" id="KOG0035">
    <property type="taxonomic scope" value="Eukaryota"/>
</dbReference>
<dbReference type="GeneTree" id="ENSGT00940000159343"/>
<dbReference type="HOGENOM" id="CLU_005217_1_1_1"/>
<dbReference type="InParanoid" id="P57780"/>
<dbReference type="PhylomeDB" id="P57780"/>
<dbReference type="TreeFam" id="TF352676"/>
<dbReference type="Reactome" id="R-MMU-114608">
    <property type="pathway name" value="Platelet degranulation"/>
</dbReference>
<dbReference type="BioGRID-ORCS" id="60595">
    <property type="hits" value="3 hits in 79 CRISPR screens"/>
</dbReference>
<dbReference type="CD-CODE" id="CE726F99">
    <property type="entry name" value="Postsynaptic density"/>
</dbReference>
<dbReference type="ChiTaRS" id="Actn4">
    <property type="organism name" value="mouse"/>
</dbReference>
<dbReference type="PRO" id="PR:P57780"/>
<dbReference type="Proteomes" id="UP000000589">
    <property type="component" value="Chromosome 7"/>
</dbReference>
<dbReference type="RNAct" id="P57780">
    <property type="molecule type" value="protein"/>
</dbReference>
<dbReference type="Bgee" id="ENSMUSG00000054808">
    <property type="expression patterns" value="Expressed in substantia propria of cornea and 264 other cell types or tissues"/>
</dbReference>
<dbReference type="ExpressionAtlas" id="P57780">
    <property type="expression patterns" value="baseline and differential"/>
</dbReference>
<dbReference type="GO" id="GO:0005911">
    <property type="term" value="C:cell-cell junction"/>
    <property type="evidence" value="ECO:0000314"/>
    <property type="project" value="UniProtKB"/>
</dbReference>
<dbReference type="GO" id="GO:0030864">
    <property type="term" value="C:cortical actin cytoskeleton"/>
    <property type="evidence" value="ECO:0000314"/>
    <property type="project" value="UniProtKB"/>
</dbReference>
<dbReference type="GO" id="GO:0030863">
    <property type="term" value="C:cortical cytoskeleton"/>
    <property type="evidence" value="ECO:0000314"/>
    <property type="project" value="MGI"/>
</dbReference>
<dbReference type="GO" id="GO:0005737">
    <property type="term" value="C:cytoplasm"/>
    <property type="evidence" value="ECO:0000314"/>
    <property type="project" value="MGI"/>
</dbReference>
<dbReference type="GO" id="GO:0005925">
    <property type="term" value="C:focal adhesion"/>
    <property type="evidence" value="ECO:0000314"/>
    <property type="project" value="UniProtKB"/>
</dbReference>
<dbReference type="GO" id="GO:0005634">
    <property type="term" value="C:nucleus"/>
    <property type="evidence" value="ECO:0000250"/>
    <property type="project" value="UniProtKB"/>
</dbReference>
<dbReference type="GO" id="GO:0048471">
    <property type="term" value="C:perinuclear region of cytoplasm"/>
    <property type="evidence" value="ECO:0000314"/>
    <property type="project" value="UniProtKB"/>
</dbReference>
<dbReference type="GO" id="GO:0031143">
    <property type="term" value="C:pseudopodium"/>
    <property type="evidence" value="ECO:0000314"/>
    <property type="project" value="UniProtKB"/>
</dbReference>
<dbReference type="GO" id="GO:1990904">
    <property type="term" value="C:ribonucleoprotein complex"/>
    <property type="evidence" value="ECO:0000250"/>
    <property type="project" value="UniProtKB"/>
</dbReference>
<dbReference type="GO" id="GO:0001725">
    <property type="term" value="C:stress fiber"/>
    <property type="evidence" value="ECO:0000314"/>
    <property type="project" value="UniProtKB"/>
</dbReference>
<dbReference type="GO" id="GO:0030018">
    <property type="term" value="C:Z disc"/>
    <property type="evidence" value="ECO:0000314"/>
    <property type="project" value="MGI"/>
</dbReference>
<dbReference type="GO" id="GO:0051015">
    <property type="term" value="F:actin filament binding"/>
    <property type="evidence" value="ECO:0000314"/>
    <property type="project" value="UniProtKB"/>
</dbReference>
<dbReference type="GO" id="GO:0005509">
    <property type="term" value="F:calcium ion binding"/>
    <property type="evidence" value="ECO:0007669"/>
    <property type="project" value="InterPro"/>
</dbReference>
<dbReference type="GO" id="GO:0005200">
    <property type="term" value="F:structural constituent of cytoskeleton"/>
    <property type="evidence" value="ECO:0000315"/>
    <property type="project" value="UniProtKB"/>
</dbReference>
<dbReference type="GO" id="GO:0003713">
    <property type="term" value="F:transcription coactivator activity"/>
    <property type="evidence" value="ECO:0000250"/>
    <property type="project" value="UniProtKB"/>
</dbReference>
<dbReference type="GO" id="GO:0051017">
    <property type="term" value="P:actin filament bundle assembly"/>
    <property type="evidence" value="ECO:0000314"/>
    <property type="project" value="UniProtKB"/>
</dbReference>
<dbReference type="GO" id="GO:0070830">
    <property type="term" value="P:bicellular tight junction assembly"/>
    <property type="evidence" value="ECO:0000315"/>
    <property type="project" value="UniProtKB"/>
</dbReference>
<dbReference type="GO" id="GO:0010467">
    <property type="term" value="P:gene expression"/>
    <property type="evidence" value="ECO:0000315"/>
    <property type="project" value="MGI"/>
</dbReference>
<dbReference type="GO" id="GO:0032835">
    <property type="term" value="P:glomerulus development"/>
    <property type="evidence" value="ECO:0000314"/>
    <property type="project" value="UniProtKB"/>
</dbReference>
<dbReference type="GO" id="GO:0035357">
    <property type="term" value="P:peroxisome proliferator activated receptor signaling pathway"/>
    <property type="evidence" value="ECO:0000250"/>
    <property type="project" value="UniProtKB"/>
</dbReference>
<dbReference type="GO" id="GO:0090521">
    <property type="term" value="P:podocyte cell migration"/>
    <property type="evidence" value="ECO:0000315"/>
    <property type="project" value="UniProtKB"/>
</dbReference>
<dbReference type="GO" id="GO:0048549">
    <property type="term" value="P:positive regulation of pinocytosis"/>
    <property type="evidence" value="ECO:0000315"/>
    <property type="project" value="UniProtKB"/>
</dbReference>
<dbReference type="GO" id="GO:1902396">
    <property type="term" value="P:protein localization to bicellular tight junction"/>
    <property type="evidence" value="ECO:0000315"/>
    <property type="project" value="UniProtKB"/>
</dbReference>
<dbReference type="GO" id="GO:0015031">
    <property type="term" value="P:protein transport"/>
    <property type="evidence" value="ECO:0007669"/>
    <property type="project" value="UniProtKB-KW"/>
</dbReference>
<dbReference type="GO" id="GO:0048384">
    <property type="term" value="P:retinoic acid receptor signaling pathway"/>
    <property type="evidence" value="ECO:0000250"/>
    <property type="project" value="UniProtKB"/>
</dbReference>
<dbReference type="CDD" id="cd21214">
    <property type="entry name" value="CH_ACTN_rpt1"/>
    <property type="match status" value="1"/>
</dbReference>
<dbReference type="CDD" id="cd21216">
    <property type="entry name" value="CH_ACTN_rpt2"/>
    <property type="match status" value="1"/>
</dbReference>
<dbReference type="CDD" id="cd00051">
    <property type="entry name" value="EFh"/>
    <property type="match status" value="1"/>
</dbReference>
<dbReference type="CDD" id="cd00176">
    <property type="entry name" value="SPEC"/>
    <property type="match status" value="3"/>
</dbReference>
<dbReference type="FunFam" id="1.10.238.10:FF:000004">
    <property type="entry name" value="Actinin alpha 1"/>
    <property type="match status" value="1"/>
</dbReference>
<dbReference type="FunFam" id="1.10.418.10:FF:000001">
    <property type="entry name" value="Actinin alpha 1"/>
    <property type="match status" value="1"/>
</dbReference>
<dbReference type="FunFam" id="1.20.58.60:FF:000004">
    <property type="entry name" value="Actinin alpha 1"/>
    <property type="match status" value="1"/>
</dbReference>
<dbReference type="FunFam" id="1.20.58.60:FF:000005">
    <property type="entry name" value="Actinin alpha 1"/>
    <property type="match status" value="1"/>
</dbReference>
<dbReference type="FunFam" id="1.10.238.10:FF:000156">
    <property type="entry name" value="Actinin alpha 4"/>
    <property type="match status" value="1"/>
</dbReference>
<dbReference type="FunFam" id="1.10.418.10:FF:000005">
    <property type="entry name" value="Actinin alpha 4"/>
    <property type="match status" value="1"/>
</dbReference>
<dbReference type="FunFam" id="1.20.58.60:FF:000002">
    <property type="entry name" value="Actinin, alpha 1"/>
    <property type="match status" value="1"/>
</dbReference>
<dbReference type="FunFam" id="1.20.58.60:FF:000003">
    <property type="entry name" value="Actinin, alpha 1"/>
    <property type="match status" value="1"/>
</dbReference>
<dbReference type="Gene3D" id="1.20.58.60">
    <property type="match status" value="4"/>
</dbReference>
<dbReference type="Gene3D" id="1.10.418.10">
    <property type="entry name" value="Calponin-like domain"/>
    <property type="match status" value="2"/>
</dbReference>
<dbReference type="Gene3D" id="1.10.238.10">
    <property type="entry name" value="EF-hand"/>
    <property type="match status" value="2"/>
</dbReference>
<dbReference type="InterPro" id="IPR001589">
    <property type="entry name" value="Actinin_actin-bd_CS"/>
</dbReference>
<dbReference type="InterPro" id="IPR001715">
    <property type="entry name" value="CH_dom"/>
</dbReference>
<dbReference type="InterPro" id="IPR036872">
    <property type="entry name" value="CH_dom_sf"/>
</dbReference>
<dbReference type="InterPro" id="IPR011992">
    <property type="entry name" value="EF-hand-dom_pair"/>
</dbReference>
<dbReference type="InterPro" id="IPR014837">
    <property type="entry name" value="EF-hand_Ca_insen"/>
</dbReference>
<dbReference type="InterPro" id="IPR018247">
    <property type="entry name" value="EF_Hand_1_Ca_BS"/>
</dbReference>
<dbReference type="InterPro" id="IPR002048">
    <property type="entry name" value="EF_hand_dom"/>
</dbReference>
<dbReference type="InterPro" id="IPR018159">
    <property type="entry name" value="Spectrin/alpha-actinin"/>
</dbReference>
<dbReference type="InterPro" id="IPR002017">
    <property type="entry name" value="Spectrin_repeat"/>
</dbReference>
<dbReference type="PANTHER" id="PTHR11915">
    <property type="entry name" value="SPECTRIN/FILAMIN RELATED CYTOSKELETAL PROTEIN"/>
    <property type="match status" value="1"/>
</dbReference>
<dbReference type="Pfam" id="PF00307">
    <property type="entry name" value="CH"/>
    <property type="match status" value="2"/>
</dbReference>
<dbReference type="Pfam" id="PF08726">
    <property type="entry name" value="EFhand_Ca_insen"/>
    <property type="match status" value="1"/>
</dbReference>
<dbReference type="Pfam" id="PF00435">
    <property type="entry name" value="Spectrin"/>
    <property type="match status" value="4"/>
</dbReference>
<dbReference type="SMART" id="SM00033">
    <property type="entry name" value="CH"/>
    <property type="match status" value="2"/>
</dbReference>
<dbReference type="SMART" id="SM00054">
    <property type="entry name" value="EFh"/>
    <property type="match status" value="2"/>
</dbReference>
<dbReference type="SMART" id="SM01184">
    <property type="entry name" value="efhand_Ca_insen"/>
    <property type="match status" value="1"/>
</dbReference>
<dbReference type="SMART" id="SM00150">
    <property type="entry name" value="SPEC"/>
    <property type="match status" value="4"/>
</dbReference>
<dbReference type="SUPFAM" id="SSF47576">
    <property type="entry name" value="Calponin-homology domain, CH-domain"/>
    <property type="match status" value="1"/>
</dbReference>
<dbReference type="SUPFAM" id="SSF47473">
    <property type="entry name" value="EF-hand"/>
    <property type="match status" value="1"/>
</dbReference>
<dbReference type="SUPFAM" id="SSF46966">
    <property type="entry name" value="Spectrin repeat"/>
    <property type="match status" value="4"/>
</dbReference>
<dbReference type="PROSITE" id="PS00019">
    <property type="entry name" value="ACTININ_1"/>
    <property type="match status" value="1"/>
</dbReference>
<dbReference type="PROSITE" id="PS00020">
    <property type="entry name" value="ACTININ_2"/>
    <property type="match status" value="1"/>
</dbReference>
<dbReference type="PROSITE" id="PS50021">
    <property type="entry name" value="CH"/>
    <property type="match status" value="2"/>
</dbReference>
<dbReference type="PROSITE" id="PS00018">
    <property type="entry name" value="EF_HAND_1"/>
    <property type="match status" value="1"/>
</dbReference>
<dbReference type="PROSITE" id="PS50222">
    <property type="entry name" value="EF_HAND_2"/>
    <property type="match status" value="2"/>
</dbReference>
<accession>P57780</accession>
<evidence type="ECO:0000250" key="1">
    <source>
        <dbReference type="UniProtKB" id="O43707"/>
    </source>
</evidence>
<evidence type="ECO:0000250" key="2">
    <source>
        <dbReference type="UniProtKB" id="P12814"/>
    </source>
</evidence>
<evidence type="ECO:0000250" key="3">
    <source>
        <dbReference type="UniProtKB" id="Q9QXQ0"/>
    </source>
</evidence>
<evidence type="ECO:0000250" key="4">
    <source>
        <dbReference type="UniProtKB" id="Q9Z1P2"/>
    </source>
</evidence>
<evidence type="ECO:0000255" key="5"/>
<evidence type="ECO:0000255" key="6">
    <source>
        <dbReference type="PROSITE-ProRule" id="PRU00044"/>
    </source>
</evidence>
<evidence type="ECO:0000255" key="7">
    <source>
        <dbReference type="PROSITE-ProRule" id="PRU00448"/>
    </source>
</evidence>
<evidence type="ECO:0000256" key="8">
    <source>
        <dbReference type="SAM" id="MobiDB-lite"/>
    </source>
</evidence>
<evidence type="ECO:0000269" key="9">
    <source>
    </source>
</evidence>
<evidence type="ECO:0000269" key="10">
    <source>
    </source>
</evidence>
<evidence type="ECO:0000305" key="11"/>
<evidence type="ECO:0000312" key="12">
    <source>
        <dbReference type="MGI" id="MGI:1890773"/>
    </source>
</evidence>
<evidence type="ECO:0007744" key="13">
    <source>
    </source>
</evidence>
<reference key="1">
    <citation type="journal article" date="2000" name="Genomics">
        <title>Gene structure, chromosomal localization and expression pattern of Capn12, a new member of the calpain large subunit gene family.</title>
        <authorList>
            <person name="Dear T.N."/>
            <person name="Meier N.T."/>
            <person name="Hunn M."/>
            <person name="Boehm T."/>
        </authorList>
    </citation>
    <scope>NUCLEOTIDE SEQUENCE [MRNA]</scope>
    <source>
        <strain>129</strain>
    </source>
</reference>
<reference key="2">
    <citation type="journal article" date="2004" name="Genome Res.">
        <title>The status, quality, and expansion of the NIH full-length cDNA project: the Mammalian Gene Collection (MGC).</title>
        <authorList>
            <consortium name="The MGC Project Team"/>
        </authorList>
    </citation>
    <scope>NUCLEOTIDE SEQUENCE [LARGE SCALE MRNA]</scope>
    <source>
        <strain>FVB/N</strain>
        <tissue>Mammary gland</tissue>
    </source>
</reference>
<reference key="3">
    <citation type="submission" date="2007-04" db="UniProtKB">
        <authorList>
            <person name="Lubec G."/>
            <person name="Kang S.U."/>
        </authorList>
    </citation>
    <scope>PROTEIN SEQUENCE OF 85-96 AND 311-319</scope>
    <scope>IDENTIFICATION BY MASS SPECTROMETRY</scope>
    <source>
        <strain>C57BL/6J</strain>
        <tissue>Brain</tissue>
    </source>
</reference>
<reference key="4">
    <citation type="journal article" date="2008" name="Mol. Cell. Biol.">
        <title>Involvement of actinin-4 in the recruitment of JRAB/MICAL-L2 to cell-cell junctions and the formation of functional tight junctions.</title>
        <authorList>
            <person name="Nakatsuji H."/>
            <person name="Nishimura N."/>
            <person name="Yamamura R."/>
            <person name="Kanayama H.O."/>
            <person name="Sasaki T."/>
        </authorList>
    </citation>
    <scope>FUNCTION IN TIGHT JUNCTION ASSEMBLY</scope>
    <scope>INTERACTION WITH MICALL2</scope>
    <scope>SUBCELLULAR LOCATION</scope>
    <scope>REGION</scope>
</reference>
<reference key="5">
    <citation type="journal article" date="2010" name="Cell">
        <title>A tissue-specific atlas of mouse protein phosphorylation and expression.</title>
        <authorList>
            <person name="Huttlin E.L."/>
            <person name="Jedrychowski M.P."/>
            <person name="Elias J.E."/>
            <person name="Goswami T."/>
            <person name="Rad R."/>
            <person name="Beausoleil S.A."/>
            <person name="Villen J."/>
            <person name="Haas W."/>
            <person name="Sowa M.E."/>
            <person name="Gygi S.P."/>
        </authorList>
    </citation>
    <scope>IDENTIFICATION BY MASS SPECTROMETRY [LARGE SCALE ANALYSIS]</scope>
    <source>
        <tissue>Brown adipose tissue</tissue>
        <tissue>Heart</tissue>
        <tissue>Kidney</tissue>
        <tissue>Liver</tissue>
        <tissue>Lung</tissue>
        <tissue>Pancreas</tissue>
        <tissue>Spleen</tissue>
        <tissue>Testis</tissue>
    </source>
</reference>
<reference key="6">
    <citation type="journal article" date="2013" name="Mol. Cell">
        <title>SIRT5-mediated lysine desuccinylation impacts diverse metabolic pathways.</title>
        <authorList>
            <person name="Park J."/>
            <person name="Chen Y."/>
            <person name="Tishkoff D.X."/>
            <person name="Peng C."/>
            <person name="Tan M."/>
            <person name="Dai L."/>
            <person name="Xie Z."/>
            <person name="Zhang Y."/>
            <person name="Zwaans B.M."/>
            <person name="Skinner M.E."/>
            <person name="Lombard D.B."/>
            <person name="Zhao Y."/>
        </authorList>
    </citation>
    <scope>ACETYLATION [LARGE SCALE ANALYSIS] AT LYS-780 AND LYS-860</scope>
    <scope>IDENTIFICATION BY MASS SPECTROMETRY [LARGE SCALE ANALYSIS]</scope>
    <source>
        <tissue>Embryonic fibroblast</tissue>
    </source>
</reference>
<reference key="7">
    <citation type="journal article" date="2020" name="Biomedicines">
        <title>ACTN4 Mediates SEPT14 Mutation-Induced Sperm Head Defects.</title>
        <authorList>
            <person name="Lin Y.H."/>
            <person name="Huang C.Y."/>
            <person name="Ke C.C."/>
            <person name="Wang Y.Y."/>
            <person name="Lai T.H."/>
            <person name="Liu H.C."/>
            <person name="Ku W.C."/>
            <person name="Chan C.C."/>
            <person name="Lin Y.H."/>
        </authorList>
    </citation>
    <scope>INTERACTION WITH SEPTIN14</scope>
    <scope>SUBCELLULAR LOCATION</scope>
    <scope>DEVELOPMENTAL STAGE</scope>
</reference>
<keyword id="KW-0007">Acetylation</keyword>
<keyword id="KW-0009">Actin-binding</keyword>
<keyword id="KW-0106">Calcium</keyword>
<keyword id="KW-0965">Cell junction</keyword>
<keyword id="KW-0963">Cytoplasm</keyword>
<keyword id="KW-0206">Cytoskeleton</keyword>
<keyword id="KW-0903">Direct protein sequencing</keyword>
<keyword id="KW-0479">Metal-binding</keyword>
<keyword id="KW-0539">Nucleus</keyword>
<keyword id="KW-0597">Phosphoprotein</keyword>
<keyword id="KW-0653">Protein transport</keyword>
<keyword id="KW-1185">Reference proteome</keyword>
<keyword id="KW-0677">Repeat</keyword>
<keyword id="KW-0813">Transport</keyword>
<feature type="chain" id="PRO_0000073441" description="Alpha-actinin-4">
    <location>
        <begin position="1"/>
        <end position="912"/>
    </location>
</feature>
<feature type="domain" description="Calponin-homology (CH) 1" evidence="6">
    <location>
        <begin position="51"/>
        <end position="155"/>
    </location>
</feature>
<feature type="domain" description="Calponin-homology (CH) 2" evidence="6">
    <location>
        <begin position="164"/>
        <end position="270"/>
    </location>
</feature>
<feature type="repeat" description="Spectrin 1" evidence="5">
    <location>
        <begin position="294"/>
        <end position="404"/>
    </location>
</feature>
<feature type="repeat" description="Spectrin 2" evidence="5">
    <location>
        <begin position="414"/>
        <end position="519"/>
    </location>
</feature>
<feature type="repeat" description="Spectrin 3" evidence="5">
    <location>
        <begin position="529"/>
        <end position="640"/>
    </location>
</feature>
<feature type="repeat" description="Spectrin 4" evidence="5">
    <location>
        <begin position="650"/>
        <end position="753"/>
    </location>
</feature>
<feature type="domain" description="EF-hand 1" evidence="7">
    <location>
        <begin position="766"/>
        <end position="801"/>
    </location>
</feature>
<feature type="domain" description="EF-hand 2" evidence="7">
    <location>
        <begin position="807"/>
        <end position="842"/>
    </location>
</feature>
<feature type="region of interest" description="Actin-binding">
    <location>
        <begin position="1"/>
        <end position="267"/>
    </location>
</feature>
<feature type="region of interest" description="Disordered" evidence="8">
    <location>
        <begin position="12"/>
        <end position="31"/>
    </location>
</feature>
<feature type="region of interest" description="Interaction with VCL" evidence="1">
    <location>
        <begin position="12"/>
        <end position="27"/>
    </location>
</feature>
<feature type="region of interest" description="Interaction with VCL" evidence="1">
    <location>
        <begin position="41"/>
        <end position="62"/>
    </location>
</feature>
<feature type="region of interest" description="Interaction with VCL" evidence="1">
    <location>
        <begin position="109"/>
        <end position="127"/>
    </location>
</feature>
<feature type="region of interest" description="Polyphosphoinositide (PIP2)-binding" evidence="5">
    <location>
        <begin position="178"/>
        <end position="193"/>
    </location>
</feature>
<feature type="region of interest" description="Mediates interaction with MICALL2" evidence="9">
    <location>
        <begin position="737"/>
        <end position="912"/>
    </location>
</feature>
<feature type="short sequence motif" description="LXXLL motif" evidence="1">
    <location>
        <begin position="85"/>
        <end position="89"/>
    </location>
</feature>
<feature type="compositionally biased region" description="Gly residues" evidence="8">
    <location>
        <begin position="16"/>
        <end position="29"/>
    </location>
</feature>
<feature type="binding site" evidence="7">
    <location>
        <position position="779"/>
    </location>
    <ligand>
        <name>Ca(2+)</name>
        <dbReference type="ChEBI" id="CHEBI:29108"/>
    </ligand>
</feature>
<feature type="binding site" evidence="7">
    <location>
        <position position="781"/>
    </location>
    <ligand>
        <name>Ca(2+)</name>
        <dbReference type="ChEBI" id="CHEBI:29108"/>
    </ligand>
</feature>
<feature type="binding site" evidence="7">
    <location>
        <position position="790"/>
    </location>
    <ligand>
        <name>Ca(2+)</name>
        <dbReference type="ChEBI" id="CHEBI:29108"/>
    </ligand>
</feature>
<feature type="modified residue" description="Phosphotyrosine" evidence="2">
    <location>
        <position position="32"/>
    </location>
</feature>
<feature type="modified residue" description="N6-acetyllysine" evidence="1">
    <location>
        <position position="115"/>
    </location>
</feature>
<feature type="modified residue" description="N6-acetyllysine" evidence="2">
    <location>
        <position position="215"/>
    </location>
</feature>
<feature type="modified residue" description="Phosphothreonine" evidence="1">
    <location>
        <position position="250"/>
    </location>
</feature>
<feature type="modified residue" description="N6-acetyllysine" evidence="1">
    <location>
        <position position="593"/>
    </location>
</feature>
<feature type="modified residue" description="N6-acetyllysine" evidence="1">
    <location>
        <position position="626"/>
    </location>
</feature>
<feature type="modified residue" description="Phosphoserine" evidence="2">
    <location>
        <position position="697"/>
    </location>
</feature>
<feature type="modified residue" description="N6-acetyllysine" evidence="13">
    <location>
        <position position="780"/>
    </location>
</feature>
<feature type="modified residue" description="N6-acetyllysine" evidence="13">
    <location>
        <position position="860"/>
    </location>
</feature>
<feature type="modified residue" description="Phosphoserine" evidence="4">
    <location>
        <position position="910"/>
    </location>
</feature>
<gene>
    <name evidence="12" type="primary">Actn4</name>
</gene>
<sequence>MVDYHAANQAYQYGPNSGGGNGAGGGGSMGDYMAQEDDWDRDLLLDPAWEKQQRKTFTAWCNSHLRKAGTQIENIDEDFRDGLKLMLLLEVISGERLPKPERGKMRVHKINNVNKALDFIASKGVKLVSIGAEEIVDGNAKMTLGMIWTIILRFAIQDISVEETSAKEGLLLWCQRKTAPYKNVNVQNFHISWKDGLAFNALIHRHRPELIEYDKLRKDDPVTNLNNAFEVAEKYLDIPKMLDAEDIVNTARPDEKAIMTYVSSFYHAFSGAQKAETAANRICKVLAVNQENEHLMEDYERLASDLLEWIRRTIPWLEDRVPQKTIQEMQQKLEDFRDYRRVHKPPKVQEKCQLEINFNTLQTKLRLSNRPAFMPSEGRMVSDINNGWQHLEQAEKGYEEWLLNEIRRLERLDHLAEKFRQKASIHEAWTDGKEAMLKQRDYETATLSDIKALIRKHEAFESDLAAHQDRVEQIAAIAQELNELDYYDSHNVNTRCQKICDQWDNLGSLTHSRREALEKTEKQLETIDQLHLEYAKRAAPFNNWMESAMEDLQDMFIVHTIEEIEGLISAHDQFKSTLPDADREREAILAIHKEAQRIAESNHIKLSGSNPYTTVTPQIINSKWEKVQQLVPKRDHALLEEQSKQQSNEHLRRQFASQANMVGPWIQTKMEEIGRISIEMNGTLEDQLSHLKQYERSIVDYKPSLDLLEQQHQLIQEALIFDNKHTNYTMEHIRVGWEQLLTTIARTINEVENQILTRDAKGISQEQMQEFRASFNHFDKDHGGALGPEEFKACLISLGYDVENDRQGDAEFNRIMSVVDPNHSGLVTFQAFIDFMSRETTDTDTADQVIASFKVLAGDKNFITAEELRRELPPDQAEYCIARMAPYQGPDAAPGALDYKSFSTALYGESDL</sequence>
<proteinExistence type="evidence at protein level"/>